<proteinExistence type="inferred from homology"/>
<dbReference type="EMBL" id="AAFW02000067">
    <property type="protein sequence ID" value="EDN62734.1"/>
    <property type="molecule type" value="Genomic_DNA"/>
</dbReference>
<dbReference type="HOGENOM" id="CLU_057191_0_0_1"/>
<dbReference type="Proteomes" id="UP000007060">
    <property type="component" value="Unassembled WGS sequence"/>
</dbReference>
<dbReference type="GO" id="GO:0005938">
    <property type="term" value="C:cell cortex"/>
    <property type="evidence" value="ECO:0007669"/>
    <property type="project" value="UniProtKB-SubCell"/>
</dbReference>
<dbReference type="GO" id="GO:0005935">
    <property type="term" value="C:cellular bud neck"/>
    <property type="evidence" value="ECO:0007669"/>
    <property type="project" value="UniProtKB-SubCell"/>
</dbReference>
<evidence type="ECO:0000250" key="1"/>
<evidence type="ECO:0000250" key="2">
    <source>
        <dbReference type="UniProtKB" id="P53939"/>
    </source>
</evidence>
<evidence type="ECO:0000256" key="3">
    <source>
        <dbReference type="SAM" id="MobiDB-lite"/>
    </source>
</evidence>
<organism>
    <name type="scientific">Saccharomyces cerevisiae (strain YJM789)</name>
    <name type="common">Baker's yeast</name>
    <dbReference type="NCBI Taxonomy" id="307796"/>
    <lineage>
        <taxon>Eukaryota</taxon>
        <taxon>Fungi</taxon>
        <taxon>Dikarya</taxon>
        <taxon>Ascomycota</taxon>
        <taxon>Saccharomycotina</taxon>
        <taxon>Saccharomycetes</taxon>
        <taxon>Saccharomycetales</taxon>
        <taxon>Saccharomycetaceae</taxon>
        <taxon>Saccharomyces</taxon>
    </lineage>
</organism>
<name>NIS1_YEAS7</name>
<comment type="function">
    <text evidence="1">May be involved in a mitotic signaling network. Binds sumoylated proteins and may stabilize SUMO chains (By similarity).</text>
</comment>
<comment type="subunit">
    <text evidence="1">Interacts with CBF2, GIS1, NAP1, PRM8, REI1, SHS1 and SMT3.</text>
</comment>
<comment type="subcellular location">
    <subcellularLocation>
        <location evidence="2">Bud neck</location>
    </subcellularLocation>
    <subcellularLocation>
        <location evidence="2">Cytoplasm</location>
        <location evidence="2">Cell cortex</location>
    </subcellularLocation>
</comment>
<comment type="induction">
    <text evidence="1">Expression is regulated by the ACE2 and SWI5 transcription factors.</text>
</comment>
<gene>
    <name type="primary">NIS1</name>
    <name type="synonym">JIP1</name>
    <name type="ORF">SCY_4713</name>
</gene>
<feature type="chain" id="PRO_0000320342" description="Protein NIS1">
    <location>
        <begin position="1"/>
        <end position="407"/>
    </location>
</feature>
<feature type="region of interest" description="Disordered" evidence="3">
    <location>
        <begin position="40"/>
        <end position="64"/>
    </location>
</feature>
<feature type="region of interest" description="Disordered" evidence="3">
    <location>
        <begin position="251"/>
        <end position="315"/>
    </location>
</feature>
<feature type="short sequence motif" description="SUMO-binding" evidence="1">
    <location>
        <begin position="391"/>
        <end position="398"/>
    </location>
</feature>
<feature type="compositionally biased region" description="Low complexity" evidence="3">
    <location>
        <begin position="40"/>
        <end position="61"/>
    </location>
</feature>
<feature type="compositionally biased region" description="Low complexity" evidence="3">
    <location>
        <begin position="266"/>
        <end position="276"/>
    </location>
</feature>
<feature type="compositionally biased region" description="Polar residues" evidence="3">
    <location>
        <begin position="277"/>
        <end position="302"/>
    </location>
</feature>
<feature type="compositionally biased region" description="Basic residues" evidence="3">
    <location>
        <begin position="306"/>
        <end position="315"/>
    </location>
</feature>
<feature type="modified residue" description="Phosphoserine" evidence="2">
    <location>
        <position position="260"/>
    </location>
</feature>
<feature type="modified residue" description="Phosphoserine" evidence="2">
    <location>
        <position position="264"/>
    </location>
</feature>
<feature type="modified residue" description="Phosphoserine" evidence="2">
    <location>
        <position position="300"/>
    </location>
</feature>
<feature type="modified residue" description="Phosphoserine" evidence="2">
    <location>
        <position position="302"/>
    </location>
</feature>
<protein>
    <recommendedName>
        <fullName>Protein NIS1</fullName>
    </recommendedName>
    <alternativeName>
        <fullName>Jumonji domain interacting protein 1</fullName>
    </alternativeName>
    <alternativeName>
        <fullName>Neck protein interacting with septins protein 1</fullName>
    </alternativeName>
</protein>
<reference key="1">
    <citation type="journal article" date="2007" name="Proc. Natl. Acad. Sci. U.S.A.">
        <title>Genome sequencing and comparative analysis of Saccharomyces cerevisiae strain YJM789.</title>
        <authorList>
            <person name="Wei W."/>
            <person name="McCusker J.H."/>
            <person name="Hyman R.W."/>
            <person name="Jones T."/>
            <person name="Ning Y."/>
            <person name="Cao Z."/>
            <person name="Gu Z."/>
            <person name="Bruno D."/>
            <person name="Miranda M."/>
            <person name="Nguyen M."/>
            <person name="Wilhelmy J."/>
            <person name="Komp C."/>
            <person name="Tamse R."/>
            <person name="Wang X."/>
            <person name="Jia P."/>
            <person name="Luedi P."/>
            <person name="Oefner P.J."/>
            <person name="David L."/>
            <person name="Dietrich F.S."/>
            <person name="Li Y."/>
            <person name="Davis R.W."/>
            <person name="Steinmetz L.M."/>
        </authorList>
    </citation>
    <scope>NUCLEOTIDE SEQUENCE [LARGE SCALE GENOMIC DNA]</scope>
    <source>
        <strain>YJM789</strain>
    </source>
</reference>
<sequence length="407" mass="45909">METYETSIGTQSYPPTLFPPPLGTGGFTTSGYIHALVDSTSNSNSNSNSNSNTNSNTNSNSDTKIPIVQISDDSHITHDSFKPYMEYHDASHLRNRNISKADQVDSTEVMEQFTQWSNYKMRSRSPTINAKPIRHTSQRRTDFTSKNELSKFSKNHNFIFHKGFLKRQHSIRREDRQAKVRSRFRSKKELTSVLNYIELEQMDIANVLASQSVNLHAIRNLTSRDPAVTPIPFLRSQMYATSSRPPYLRNRSIRRKLPKSQPGSLPTTTPATATKTIKQNSTTPTTRSVYNKNVGRSNTSPSVLYHPKRRGKLNTKSHARKEQLLLELWREYLMLVITQRTQLRLTLLCSPGSASNESSVCSSNASDLDMSLLSTPSSLFQMAGETKSNPIIIPDSQDDSILSSDPF</sequence>
<keyword id="KW-0963">Cytoplasm</keyword>
<keyword id="KW-0597">Phosphoprotein</keyword>
<accession>A6ZS02</accession>